<organism>
    <name type="scientific">Streptococcus pyogenes serotype M1</name>
    <dbReference type="NCBI Taxonomy" id="301447"/>
    <lineage>
        <taxon>Bacteria</taxon>
        <taxon>Bacillati</taxon>
        <taxon>Bacillota</taxon>
        <taxon>Bacilli</taxon>
        <taxon>Lactobacillales</taxon>
        <taxon>Streptococcaceae</taxon>
        <taxon>Streptococcus</taxon>
    </lineage>
</organism>
<comment type="function">
    <text evidence="1">Reversibly catalyzes the transfer of the carbamoyl group from carbamoyl phosphate (CP) to the N(epsilon) atom of ornithine (ORN) to produce L-citrulline.</text>
</comment>
<comment type="catalytic activity">
    <reaction>
        <text>carbamoyl phosphate + L-ornithine = L-citrulline + phosphate + H(+)</text>
        <dbReference type="Rhea" id="RHEA:19513"/>
        <dbReference type="ChEBI" id="CHEBI:15378"/>
        <dbReference type="ChEBI" id="CHEBI:43474"/>
        <dbReference type="ChEBI" id="CHEBI:46911"/>
        <dbReference type="ChEBI" id="CHEBI:57743"/>
        <dbReference type="ChEBI" id="CHEBI:58228"/>
        <dbReference type="EC" id="2.1.3.3"/>
    </reaction>
</comment>
<comment type="pathway">
    <text>Amino-acid degradation; L-arginine degradation via ADI pathway; carbamoyl phosphate from L-arginine: step 2/2.</text>
</comment>
<comment type="subcellular location">
    <subcellularLocation>
        <location evidence="1">Cytoplasm</location>
    </subcellularLocation>
</comment>
<comment type="similarity">
    <text evidence="3">Belongs to the aspartate/ornithine carbamoyltransferase superfamily. OTCase family.</text>
</comment>
<gene>
    <name type="primary">arcB</name>
    <name type="ordered locus">SPy_1544</name>
    <name type="ordered locus">M5005_Spy1273</name>
</gene>
<evidence type="ECO:0000250" key="1"/>
<evidence type="ECO:0000255" key="2">
    <source>
        <dbReference type="HAMAP-Rule" id="MF_01109"/>
    </source>
</evidence>
<evidence type="ECO:0000305" key="3"/>
<sequence length="337" mass="37897">MTQVFQGRSFLAEKDFTRAELEYLIDFSAHLKDLKKRGVPHHYLEGKNIALLFEKTSTRTRAAFTTAAIDLGAHPEYLGANDIQLGKKESTEDTAKVLGRMFDGIEFRGFSQRMVEELAEFSGVPVWNGLTDEWHPTQMLADYLTVKENFGKLEGLTLVYCGDGRNNVANSLLVTGAILGVNVHIFSPKELFPEEEIVTLAEGYAKESGARILITEDADEAVKGADVLYTDVWVSMGEEDKFKERVELLQPYQVNMDLVQKAGNDKLIFLHCLPAFHDTNTVYGKDVAEKFGVKEMEVTDEVFRSKYARHFDQAENRMHTIKAVMAATLGNLFIPKV</sequence>
<protein>
    <recommendedName>
        <fullName>Ornithine carbamoyltransferase, catabolic</fullName>
        <shortName>OTCase</shortName>
        <ecNumber>2.1.3.3</ecNumber>
    </recommendedName>
</protein>
<keyword id="KW-0056">Arginine metabolism</keyword>
<keyword id="KW-0963">Cytoplasm</keyword>
<keyword id="KW-1185">Reference proteome</keyword>
<keyword id="KW-0808">Transferase</keyword>
<reference key="1">
    <citation type="journal article" date="2001" name="Proc. Natl. Acad. Sci. U.S.A.">
        <title>Complete genome sequence of an M1 strain of Streptococcus pyogenes.</title>
        <authorList>
            <person name="Ferretti J.J."/>
            <person name="McShan W.M."/>
            <person name="Ajdic D.J."/>
            <person name="Savic D.J."/>
            <person name="Savic G."/>
            <person name="Lyon K."/>
            <person name="Primeaux C."/>
            <person name="Sezate S."/>
            <person name="Suvorov A.N."/>
            <person name="Kenton S."/>
            <person name="Lai H.S."/>
            <person name="Lin S.P."/>
            <person name="Qian Y."/>
            <person name="Jia H.G."/>
            <person name="Najar F.Z."/>
            <person name="Ren Q."/>
            <person name="Zhu H."/>
            <person name="Song L."/>
            <person name="White J."/>
            <person name="Yuan X."/>
            <person name="Clifton S.W."/>
            <person name="Roe B.A."/>
            <person name="McLaughlin R.E."/>
        </authorList>
    </citation>
    <scope>NUCLEOTIDE SEQUENCE [LARGE SCALE GENOMIC DNA]</scope>
    <source>
        <strain>ATCC 700294 / SF370 / Serotype M1</strain>
    </source>
</reference>
<reference key="2">
    <citation type="submission" date="2014-04" db="EMBL/GenBank/DDBJ databases">
        <authorList>
            <person name="Beres S.B."/>
            <person name="Musser J.M."/>
        </authorList>
    </citation>
    <scope>SEQUENCE REVISION TO 144</scope>
</reference>
<reference key="3">
    <citation type="journal article" date="2005" name="J. Infect. Dis.">
        <title>Evolutionary origin and emergence of a highly successful clone of serotype M1 group A Streptococcus involved multiple horizontal gene transfer events.</title>
        <authorList>
            <person name="Sumby P."/>
            <person name="Porcella S.F."/>
            <person name="Madrigal A.G."/>
            <person name="Barbian K.D."/>
            <person name="Virtaneva K."/>
            <person name="Ricklefs S.M."/>
            <person name="Sturdevant D.E."/>
            <person name="Graham M.R."/>
            <person name="Vuopio-Varkila J."/>
            <person name="Hoe N.P."/>
            <person name="Musser J.M."/>
        </authorList>
    </citation>
    <scope>NUCLEOTIDE SEQUENCE [LARGE SCALE GENOMIC DNA]</scope>
    <source>
        <strain>ATCC BAA-947 / MGAS5005 / Serotype M1</strain>
    </source>
</reference>
<proteinExistence type="inferred from homology"/>
<feature type="initiator methionine" description="Removed" evidence="1">
    <location>
        <position position="1"/>
    </location>
</feature>
<feature type="chain" id="PRO_0000113038" description="Ornithine carbamoyltransferase, catabolic">
    <location>
        <begin position="2"/>
        <end position="337"/>
    </location>
</feature>
<feature type="binding site" evidence="2">
    <location>
        <begin position="57"/>
        <end position="60"/>
    </location>
    <ligand>
        <name>carbamoyl phosphate</name>
        <dbReference type="ChEBI" id="CHEBI:58228"/>
    </ligand>
</feature>
<feature type="binding site" evidence="2">
    <location>
        <position position="84"/>
    </location>
    <ligand>
        <name>carbamoyl phosphate</name>
        <dbReference type="ChEBI" id="CHEBI:58228"/>
    </ligand>
</feature>
<feature type="binding site" evidence="2">
    <location>
        <position position="108"/>
    </location>
    <ligand>
        <name>carbamoyl phosphate</name>
        <dbReference type="ChEBI" id="CHEBI:58228"/>
    </ligand>
</feature>
<feature type="binding site" evidence="2">
    <location>
        <begin position="135"/>
        <end position="138"/>
    </location>
    <ligand>
        <name>carbamoyl phosphate</name>
        <dbReference type="ChEBI" id="CHEBI:58228"/>
    </ligand>
</feature>
<feature type="binding site" evidence="2">
    <location>
        <position position="167"/>
    </location>
    <ligand>
        <name>L-ornithine</name>
        <dbReference type="ChEBI" id="CHEBI:46911"/>
    </ligand>
</feature>
<feature type="binding site" evidence="2">
    <location>
        <position position="231"/>
    </location>
    <ligand>
        <name>L-ornithine</name>
        <dbReference type="ChEBI" id="CHEBI:46911"/>
    </ligand>
</feature>
<feature type="binding site" evidence="2">
    <location>
        <begin position="235"/>
        <end position="236"/>
    </location>
    <ligand>
        <name>L-ornithine</name>
        <dbReference type="ChEBI" id="CHEBI:46911"/>
    </ligand>
</feature>
<feature type="binding site" evidence="2">
    <location>
        <begin position="272"/>
        <end position="273"/>
    </location>
    <ligand>
        <name>carbamoyl phosphate</name>
        <dbReference type="ChEBI" id="CHEBI:58228"/>
    </ligand>
</feature>
<feature type="binding site" evidence="2">
    <location>
        <position position="317"/>
    </location>
    <ligand>
        <name>carbamoyl phosphate</name>
        <dbReference type="ChEBI" id="CHEBI:58228"/>
    </ligand>
</feature>
<accession>P0C0D0</accession>
<accession>P16964</accession>
<accession>Q48XN4</accession>
<name>OTCC_STRP1</name>
<dbReference type="EC" id="2.1.3.3"/>
<dbReference type="EMBL" id="AE004092">
    <property type="protein sequence ID" value="AAK34337.2"/>
    <property type="molecule type" value="Genomic_DNA"/>
</dbReference>
<dbReference type="EMBL" id="CP000017">
    <property type="protein sequence ID" value="AAZ51891.1"/>
    <property type="molecule type" value="Genomic_DNA"/>
</dbReference>
<dbReference type="RefSeq" id="NP_269616.2">
    <property type="nucleotide sequence ID" value="NC_002737.2"/>
</dbReference>
<dbReference type="SMR" id="P0C0D0"/>
<dbReference type="PaxDb" id="1314-HKU360_01314"/>
<dbReference type="KEGG" id="spy:SPy_1544"/>
<dbReference type="KEGG" id="spz:M5005_Spy1273"/>
<dbReference type="PATRIC" id="fig|160490.10.peg.1350"/>
<dbReference type="HOGENOM" id="CLU_043846_3_1_9"/>
<dbReference type="UniPathway" id="UPA00254">
    <property type="reaction ID" value="UER00365"/>
</dbReference>
<dbReference type="Proteomes" id="UP000000750">
    <property type="component" value="Chromosome"/>
</dbReference>
<dbReference type="GO" id="GO:0005737">
    <property type="term" value="C:cytoplasm"/>
    <property type="evidence" value="ECO:0007669"/>
    <property type="project" value="UniProtKB-SubCell"/>
</dbReference>
<dbReference type="GO" id="GO:0016597">
    <property type="term" value="F:amino acid binding"/>
    <property type="evidence" value="ECO:0007669"/>
    <property type="project" value="InterPro"/>
</dbReference>
<dbReference type="GO" id="GO:0004585">
    <property type="term" value="F:ornithine carbamoyltransferase activity"/>
    <property type="evidence" value="ECO:0007669"/>
    <property type="project" value="UniProtKB-UniRule"/>
</dbReference>
<dbReference type="GO" id="GO:0042450">
    <property type="term" value="P:arginine biosynthetic process via ornithine"/>
    <property type="evidence" value="ECO:0007669"/>
    <property type="project" value="TreeGrafter"/>
</dbReference>
<dbReference type="GO" id="GO:0019547">
    <property type="term" value="P:arginine catabolic process to ornithine"/>
    <property type="evidence" value="ECO:0007669"/>
    <property type="project" value="UniProtKB-UniRule"/>
</dbReference>
<dbReference type="GO" id="GO:0019240">
    <property type="term" value="P:citrulline biosynthetic process"/>
    <property type="evidence" value="ECO:0007669"/>
    <property type="project" value="TreeGrafter"/>
</dbReference>
<dbReference type="FunFam" id="3.40.50.1370:FF:000004">
    <property type="entry name" value="Ornithine carbamoyltransferase"/>
    <property type="match status" value="1"/>
</dbReference>
<dbReference type="Gene3D" id="3.40.50.1370">
    <property type="entry name" value="Aspartate/ornithine carbamoyltransferase"/>
    <property type="match status" value="2"/>
</dbReference>
<dbReference type="HAMAP" id="MF_01109">
    <property type="entry name" value="OTCase"/>
    <property type="match status" value="1"/>
</dbReference>
<dbReference type="InterPro" id="IPR006132">
    <property type="entry name" value="Asp/Orn_carbamoyltranf_P-bd"/>
</dbReference>
<dbReference type="InterPro" id="IPR006130">
    <property type="entry name" value="Asp/Orn_carbamoylTrfase"/>
</dbReference>
<dbReference type="InterPro" id="IPR036901">
    <property type="entry name" value="Asp/Orn_carbamoylTrfase_sf"/>
</dbReference>
<dbReference type="InterPro" id="IPR006131">
    <property type="entry name" value="Asp_carbamoyltransf_Asp/Orn-bd"/>
</dbReference>
<dbReference type="InterPro" id="IPR002292">
    <property type="entry name" value="Orn/put_carbamltrans"/>
</dbReference>
<dbReference type="InterPro" id="IPR024904">
    <property type="entry name" value="OTCase_ArgI"/>
</dbReference>
<dbReference type="NCBIfam" id="TIGR00658">
    <property type="entry name" value="orni_carb_tr"/>
    <property type="match status" value="1"/>
</dbReference>
<dbReference type="NCBIfam" id="NF001986">
    <property type="entry name" value="PRK00779.1"/>
    <property type="match status" value="1"/>
</dbReference>
<dbReference type="PANTHER" id="PTHR45753:SF1">
    <property type="entry name" value="ORNITHINE CARBAMOYLTRANSFERASE, CATABOLIC"/>
    <property type="match status" value="1"/>
</dbReference>
<dbReference type="PANTHER" id="PTHR45753">
    <property type="entry name" value="ORNITHINE CARBAMOYLTRANSFERASE, MITOCHONDRIAL"/>
    <property type="match status" value="1"/>
</dbReference>
<dbReference type="Pfam" id="PF00185">
    <property type="entry name" value="OTCace"/>
    <property type="match status" value="1"/>
</dbReference>
<dbReference type="Pfam" id="PF02729">
    <property type="entry name" value="OTCace_N"/>
    <property type="match status" value="1"/>
</dbReference>
<dbReference type="PRINTS" id="PR00100">
    <property type="entry name" value="AOTCASE"/>
</dbReference>
<dbReference type="PRINTS" id="PR00102">
    <property type="entry name" value="OTCASE"/>
</dbReference>
<dbReference type="SUPFAM" id="SSF53671">
    <property type="entry name" value="Aspartate/ornithine carbamoyltransferase"/>
    <property type="match status" value="1"/>
</dbReference>
<dbReference type="PROSITE" id="PS00097">
    <property type="entry name" value="CARBAMOYLTRANSFERASE"/>
    <property type="match status" value="1"/>
</dbReference>